<evidence type="ECO:0000255" key="1"/>
<evidence type="ECO:0000305" key="2"/>
<dbReference type="EMBL" id="AE017224">
    <property type="protein sequence ID" value="AAX75745.1"/>
    <property type="molecule type" value="Genomic_DNA"/>
</dbReference>
<dbReference type="RefSeq" id="WP_002965726.1">
    <property type="nucleotide sequence ID" value="NC_006933.1"/>
</dbReference>
<dbReference type="EnsemblBacteria" id="AAX75745">
    <property type="protein sequence ID" value="AAX75745"/>
    <property type="gene ID" value="BruAb2_0312"/>
</dbReference>
<dbReference type="KEGG" id="bmb:BruAb2_0312"/>
<dbReference type="HOGENOM" id="CLU_057473_0_0_5"/>
<dbReference type="Proteomes" id="UP000000540">
    <property type="component" value="Chromosome II"/>
</dbReference>
<dbReference type="Gene3D" id="2.40.160.20">
    <property type="match status" value="1"/>
</dbReference>
<dbReference type="InterPro" id="IPR011250">
    <property type="entry name" value="OMP/PagP_b-brl"/>
</dbReference>
<dbReference type="InterPro" id="IPR027385">
    <property type="entry name" value="OMP_b-brl"/>
</dbReference>
<dbReference type="Pfam" id="PF13505">
    <property type="entry name" value="OMP_b-brl"/>
    <property type="match status" value="1"/>
</dbReference>
<dbReference type="SUPFAM" id="SSF56925">
    <property type="entry name" value="OMPA-like"/>
    <property type="match status" value="1"/>
</dbReference>
<name>Y312_BRUAB</name>
<reference key="1">
    <citation type="journal article" date="2005" name="J. Bacteriol.">
        <title>Completion of the genome sequence of Brucella abortus and comparison to the highly similar genomes of Brucella melitensis and Brucella suis.</title>
        <authorList>
            <person name="Halling S.M."/>
            <person name="Peterson-Burch B.D."/>
            <person name="Bricker B.J."/>
            <person name="Zuerner R.L."/>
            <person name="Qing Z."/>
            <person name="Li L.-L."/>
            <person name="Kapur V."/>
            <person name="Alt D.P."/>
            <person name="Olsen S.C."/>
        </authorList>
    </citation>
    <scope>NUCLEOTIDE SEQUENCE [LARGE SCALE GENOMIC DNA]</scope>
    <source>
        <strain>9-941</strain>
    </source>
</reference>
<feature type="signal peptide" evidence="1">
    <location>
        <begin position="1"/>
        <end position="23"/>
    </location>
</feature>
<feature type="chain" id="PRO_0000284475" description="Uncharacterized protein BruAb2_0312">
    <location>
        <begin position="24"/>
        <end position="284"/>
    </location>
</feature>
<comment type="similarity">
    <text evidence="2">Belongs to the surface antigen msp4 family.</text>
</comment>
<gene>
    <name type="ordered locus">BruAb2_0312</name>
</gene>
<proteinExistence type="inferred from homology"/>
<keyword id="KW-0732">Signal</keyword>
<organism>
    <name type="scientific">Brucella abortus biovar 1 (strain 9-941)</name>
    <dbReference type="NCBI Taxonomy" id="262698"/>
    <lineage>
        <taxon>Bacteria</taxon>
        <taxon>Pseudomonadati</taxon>
        <taxon>Pseudomonadota</taxon>
        <taxon>Alphaproteobacteria</taxon>
        <taxon>Hyphomicrobiales</taxon>
        <taxon>Brucellaceae</taxon>
        <taxon>Brucella/Ochrobactrum group</taxon>
        <taxon>Brucella</taxon>
    </lineage>
</organism>
<sequence length="284" mass="31552">MKRGCAIAVMICGLITSVSAASAADLIVQEPVFEPLPQPALAGWYLRGDIGYNFKSKTGGKWDFWNQFEEPYRGVDDTFNYDDFSLKGGASYGVGVGYRFNDMLRTDLTLDYFRASINGRTNCRSYVKSSHGLNPVEDNCHYEDNSKASVWTAMANAYVDLPRVGPLTPYLGAGIGAAYVKYDTWKTSEICPTCTLQSDKDGFDSWRFAMALMAGVSYDLTDQLKLDLGYRYLRVNGGNAYGYDEQDRQVINQYGQGAGADGPQAKDNGFNIHTVRAGLRYEFR</sequence>
<protein>
    <recommendedName>
        <fullName>Uncharacterized protein BruAb2_0312</fullName>
    </recommendedName>
</protein>
<accession>Q579D9</accession>